<evidence type="ECO:0000255" key="1"/>
<evidence type="ECO:0000269" key="2">
    <source>
    </source>
</evidence>
<evidence type="ECO:0000303" key="3">
    <source>
    </source>
</evidence>
<evidence type="ECO:0000305" key="4"/>
<evidence type="ECO:0000305" key="5">
    <source>
    </source>
</evidence>
<proteinExistence type="inferred from homology"/>
<name>AGN1_PAEDI</name>
<accession>A0A411PQP6</accession>
<reference key="1">
    <citation type="journal article" date="2019" name="Chem. Sci.">
        <title>Characterisation of the biosynthetic pathway to agnestins A and B reveals the reductive route to chrysophanol in fungi.</title>
        <authorList>
            <person name="Szwalbe A.J."/>
            <person name="Williams K."/>
            <person name="Song Z."/>
            <person name="de Mattos-Shipley K."/>
            <person name="Vincent J.L."/>
            <person name="Bailey A.M."/>
            <person name="Willis C.L."/>
            <person name="Cox R.J."/>
            <person name="Simpson T.J."/>
        </authorList>
    </citation>
    <scope>NUCLEOTIDE SEQUENCE [GENOMIC DNA]</scope>
    <scope>FUNCTION</scope>
    <scope>PATHWAY</scope>
    <source>
        <strain>K5013</strain>
    </source>
</reference>
<organism>
    <name type="scientific">Paecilomyces divaricatus</name>
    <name type="common">Penicillium divaricatum</name>
    <dbReference type="NCBI Taxonomy" id="644132"/>
    <lineage>
        <taxon>Eukaryota</taxon>
        <taxon>Fungi</taxon>
        <taxon>Dikarya</taxon>
        <taxon>Ascomycota</taxon>
        <taxon>Pezizomycotina</taxon>
        <taxon>Eurotiomycetes</taxon>
        <taxon>Eurotiomycetidae</taxon>
        <taxon>Eurotiales</taxon>
        <taxon>Thermoascaceae</taxon>
        <taxon>Paecilomyces</taxon>
    </lineage>
</organism>
<protein>
    <recommendedName>
        <fullName evidence="3">Decarboxylase AgnL1</fullName>
        <ecNumber evidence="5">4.1.1.-</ecNumber>
    </recommendedName>
    <alternativeName>
        <fullName evidence="3">Agnestins biosynthesis cluster protein L1</fullName>
    </alternativeName>
</protein>
<sequence length="149" mass="17303">MPDASEIPPPPPGAPGTQFLCLTICGYRRPGMSEEDYRHHMTQVSAPMTQDLMVKYGVKRWTMVHNTSETRALMSRLFDHQMTQLADFDCFSQVVFESVEEYRRMKEDAWYQEHLVGDHEKFADTQRSRMTLGWITELIRDGKVVKGTQ</sequence>
<feature type="chain" id="PRO_0000449012" description="Decarboxylase AgnL1">
    <location>
        <begin position="1"/>
        <end position="149"/>
    </location>
</feature>
<feature type="domain" description="EthD" evidence="1">
    <location>
        <begin position="30"/>
        <end position="125"/>
    </location>
</feature>
<dbReference type="EC" id="4.1.1.-" evidence="5"/>
<dbReference type="EMBL" id="MH898872">
    <property type="protein sequence ID" value="QBG38887.1"/>
    <property type="molecule type" value="Genomic_DNA"/>
</dbReference>
<dbReference type="GO" id="GO:0016829">
    <property type="term" value="F:lyase activity"/>
    <property type="evidence" value="ECO:0007669"/>
    <property type="project" value="UniProtKB-KW"/>
</dbReference>
<dbReference type="GO" id="GO:0016491">
    <property type="term" value="F:oxidoreductase activity"/>
    <property type="evidence" value="ECO:0007669"/>
    <property type="project" value="InterPro"/>
</dbReference>
<dbReference type="Gene3D" id="3.30.70.100">
    <property type="match status" value="1"/>
</dbReference>
<dbReference type="InterPro" id="IPR011008">
    <property type="entry name" value="Dimeric_a/b-barrel"/>
</dbReference>
<dbReference type="InterPro" id="IPR009799">
    <property type="entry name" value="EthD_dom"/>
</dbReference>
<dbReference type="Pfam" id="PF07110">
    <property type="entry name" value="EthD"/>
    <property type="match status" value="1"/>
</dbReference>
<dbReference type="SUPFAM" id="SSF54909">
    <property type="entry name" value="Dimeric alpha+beta barrel"/>
    <property type="match status" value="1"/>
</dbReference>
<keyword id="KW-0456">Lyase</keyword>
<comment type="function">
    <text evidence="2">Decarboxylase; part of the gene cluster that mediates the biosynthesis of agnestins, dihydroxy-xanthone metabolites (PubMed:30746079). The pathway begins with the assembly and cyclization of atrochrysone thioester by the non-reducing polyketide synthase Agnpks1 (PubMed:30746079). The atrochrysone carboxyl ACP thioesterase AgnL7 then breaks the thioester bond and releases the atrochrysone carboxylic acid as the first enzyme-free intermediate (PubMed:30746079). The decarboxylase AgnL1 then catalyzes the concerted decarboxylation-elimination required to convert atochrysone carboxylic acid into emodin anthrone, which is further oxidized to emodin by the anthrone oxygenase AgnL2 (PubMed:30746079). Emodin then undergoes reduction catalyzed by the oxidoreductase AgnL4 to yield the dihydroquinone tautomer which is the substrate for reduction by the short chain dehydrogenase AgnL6 reduction to produce hydroxyketone, followed by AgnL8 dehydration and likely spontaneous autoxidation to chrysophanol (PubMed:30746079). Baeyer-Villiger oxidation by the oxidase AgnL3 leads to monodictyphenone via cleavage of the C-10/C-10a bond of chrysophanol (PubMed:30746079). Alternative cleavage at the C-4a/C-10 bond of chrysophanol also leads to the formation some cephalone F (PubMed:30746079). Further conversion to agnestins A and B, requires reduction to dihydro-monodictyphenone, oxidation to agnestin C probably via an epoxide, and rearrangement to either agnestin A or agnestin B directly, although agnestin A or agnestin B can also interconvert (PubMed:30746079). Within the cluster, AgnR1 is the only unassigned oxidoreductase present which could be involved in this conversion. However, AgnR1 seems not to be involved in this step, and thus genes involved in the proposed oxidation/reduction may be located elsewhere on the genome (PubMed:30746079). Further agnestin A derivatives are probably formed by spontaneous decarboxylations, dehydrations and methanolysis reactions (PubMed:30746079).</text>
</comment>
<comment type="catalytic activity">
    <reaction evidence="5">
        <text>atrochrysone carboxylate + H(+) = atrochrysone + CO2</text>
        <dbReference type="Rhea" id="RHEA:64264"/>
        <dbReference type="ChEBI" id="CHEBI:15378"/>
        <dbReference type="ChEBI" id="CHEBI:16526"/>
        <dbReference type="ChEBI" id="CHEBI:149713"/>
        <dbReference type="ChEBI" id="CHEBI:150016"/>
    </reaction>
    <physiologicalReaction direction="left-to-right" evidence="5">
        <dbReference type="Rhea" id="RHEA:64265"/>
    </physiologicalReaction>
</comment>
<comment type="pathway">
    <text evidence="5">Secondary metabolite biosynthesis.</text>
</comment>
<comment type="similarity">
    <text evidence="4">Belongs to the tpcK family.</text>
</comment>
<gene>
    <name evidence="3" type="primary">AgnL1</name>
</gene>